<reference key="1">
    <citation type="journal article" date="2002" name="Proc. Natl. Acad. Sci. U.S.A.">
        <title>The genome sequence of Bifidobacterium longum reflects its adaptation to the human gastrointestinal tract.</title>
        <authorList>
            <person name="Schell M.A."/>
            <person name="Karmirantzou M."/>
            <person name="Snel B."/>
            <person name="Vilanova D."/>
            <person name="Berger B."/>
            <person name="Pessi G."/>
            <person name="Zwahlen M.-C."/>
            <person name="Desiere F."/>
            <person name="Bork P."/>
            <person name="Delley M."/>
            <person name="Pridmore R.D."/>
            <person name="Arigoni F."/>
        </authorList>
    </citation>
    <scope>NUCLEOTIDE SEQUENCE [LARGE SCALE GENOMIC DNA]</scope>
    <source>
        <strain>NCC 2705</strain>
    </source>
</reference>
<gene>
    <name evidence="1" type="primary">guaA</name>
    <name type="ordered locus">BL0960</name>
</gene>
<dbReference type="EC" id="6.3.5.2" evidence="1"/>
<dbReference type="EMBL" id="AE014295">
    <property type="protein sequence ID" value="AAN24772.1"/>
    <property type="molecule type" value="Genomic_DNA"/>
</dbReference>
<dbReference type="RefSeq" id="NP_696136.1">
    <property type="nucleotide sequence ID" value="NC_004307.2"/>
</dbReference>
<dbReference type="SMR" id="Q8G5P4"/>
<dbReference type="STRING" id="206672.BL0960"/>
<dbReference type="MEROPS" id="C26.957"/>
<dbReference type="EnsemblBacteria" id="AAN24772">
    <property type="protein sequence ID" value="AAN24772"/>
    <property type="gene ID" value="BL0960"/>
</dbReference>
<dbReference type="KEGG" id="blo:BL0960"/>
<dbReference type="PATRIC" id="fig|206672.9.peg.664"/>
<dbReference type="HOGENOM" id="CLU_014340_0_5_11"/>
<dbReference type="OrthoDB" id="9802219at2"/>
<dbReference type="PhylomeDB" id="Q8G5P4"/>
<dbReference type="UniPathway" id="UPA00189">
    <property type="reaction ID" value="UER00296"/>
</dbReference>
<dbReference type="Proteomes" id="UP000000439">
    <property type="component" value="Chromosome"/>
</dbReference>
<dbReference type="GO" id="GO:0005829">
    <property type="term" value="C:cytosol"/>
    <property type="evidence" value="ECO:0007669"/>
    <property type="project" value="TreeGrafter"/>
</dbReference>
<dbReference type="GO" id="GO:0005524">
    <property type="term" value="F:ATP binding"/>
    <property type="evidence" value="ECO:0007669"/>
    <property type="project" value="UniProtKB-UniRule"/>
</dbReference>
<dbReference type="GO" id="GO:0003921">
    <property type="term" value="F:GMP synthase activity"/>
    <property type="evidence" value="ECO:0007669"/>
    <property type="project" value="InterPro"/>
</dbReference>
<dbReference type="CDD" id="cd01742">
    <property type="entry name" value="GATase1_GMP_Synthase"/>
    <property type="match status" value="1"/>
</dbReference>
<dbReference type="CDD" id="cd01997">
    <property type="entry name" value="GMP_synthase_C"/>
    <property type="match status" value="1"/>
</dbReference>
<dbReference type="FunFam" id="3.30.300.10:FF:000002">
    <property type="entry name" value="GMP synthase [glutamine-hydrolyzing]"/>
    <property type="match status" value="1"/>
</dbReference>
<dbReference type="FunFam" id="3.40.50.620:FF:000001">
    <property type="entry name" value="GMP synthase [glutamine-hydrolyzing]"/>
    <property type="match status" value="1"/>
</dbReference>
<dbReference type="FunFam" id="3.40.50.880:FF:000001">
    <property type="entry name" value="GMP synthase [glutamine-hydrolyzing]"/>
    <property type="match status" value="1"/>
</dbReference>
<dbReference type="Gene3D" id="3.30.300.10">
    <property type="match status" value="1"/>
</dbReference>
<dbReference type="Gene3D" id="3.40.50.880">
    <property type="match status" value="1"/>
</dbReference>
<dbReference type="Gene3D" id="3.40.50.620">
    <property type="entry name" value="HUPs"/>
    <property type="match status" value="1"/>
</dbReference>
<dbReference type="HAMAP" id="MF_00344">
    <property type="entry name" value="GMP_synthase"/>
    <property type="match status" value="1"/>
</dbReference>
<dbReference type="InterPro" id="IPR029062">
    <property type="entry name" value="Class_I_gatase-like"/>
</dbReference>
<dbReference type="InterPro" id="IPR017926">
    <property type="entry name" value="GATASE"/>
</dbReference>
<dbReference type="InterPro" id="IPR001674">
    <property type="entry name" value="GMP_synth_C"/>
</dbReference>
<dbReference type="InterPro" id="IPR004739">
    <property type="entry name" value="GMP_synth_GATase"/>
</dbReference>
<dbReference type="InterPro" id="IPR022955">
    <property type="entry name" value="GMP_synthase"/>
</dbReference>
<dbReference type="InterPro" id="IPR025777">
    <property type="entry name" value="GMPS_ATP_PPase_dom"/>
</dbReference>
<dbReference type="InterPro" id="IPR022310">
    <property type="entry name" value="NAD/GMP_synthase"/>
</dbReference>
<dbReference type="InterPro" id="IPR014729">
    <property type="entry name" value="Rossmann-like_a/b/a_fold"/>
</dbReference>
<dbReference type="NCBIfam" id="TIGR00884">
    <property type="entry name" value="guaA_Cterm"/>
    <property type="match status" value="1"/>
</dbReference>
<dbReference type="NCBIfam" id="TIGR00888">
    <property type="entry name" value="guaA_Nterm"/>
    <property type="match status" value="1"/>
</dbReference>
<dbReference type="NCBIfam" id="NF000848">
    <property type="entry name" value="PRK00074.1"/>
    <property type="match status" value="1"/>
</dbReference>
<dbReference type="PANTHER" id="PTHR11922:SF2">
    <property type="entry name" value="GMP SYNTHASE [GLUTAMINE-HYDROLYZING]"/>
    <property type="match status" value="1"/>
</dbReference>
<dbReference type="PANTHER" id="PTHR11922">
    <property type="entry name" value="GMP SYNTHASE-RELATED"/>
    <property type="match status" value="1"/>
</dbReference>
<dbReference type="Pfam" id="PF00117">
    <property type="entry name" value="GATase"/>
    <property type="match status" value="1"/>
</dbReference>
<dbReference type="Pfam" id="PF00958">
    <property type="entry name" value="GMP_synt_C"/>
    <property type="match status" value="1"/>
</dbReference>
<dbReference type="Pfam" id="PF02540">
    <property type="entry name" value="NAD_synthase"/>
    <property type="match status" value="1"/>
</dbReference>
<dbReference type="PRINTS" id="PR00099">
    <property type="entry name" value="CPSGATASE"/>
</dbReference>
<dbReference type="PRINTS" id="PR00096">
    <property type="entry name" value="GATASE"/>
</dbReference>
<dbReference type="SUPFAM" id="SSF52402">
    <property type="entry name" value="Adenine nucleotide alpha hydrolases-like"/>
    <property type="match status" value="1"/>
</dbReference>
<dbReference type="SUPFAM" id="SSF52317">
    <property type="entry name" value="Class I glutamine amidotransferase-like"/>
    <property type="match status" value="1"/>
</dbReference>
<dbReference type="SUPFAM" id="SSF54810">
    <property type="entry name" value="GMP synthetase C-terminal dimerisation domain"/>
    <property type="match status" value="1"/>
</dbReference>
<dbReference type="PROSITE" id="PS51273">
    <property type="entry name" value="GATASE_TYPE_1"/>
    <property type="match status" value="1"/>
</dbReference>
<dbReference type="PROSITE" id="PS51553">
    <property type="entry name" value="GMPS_ATP_PPASE"/>
    <property type="match status" value="1"/>
</dbReference>
<organism>
    <name type="scientific">Bifidobacterium longum (strain NCC 2705)</name>
    <dbReference type="NCBI Taxonomy" id="206672"/>
    <lineage>
        <taxon>Bacteria</taxon>
        <taxon>Bacillati</taxon>
        <taxon>Actinomycetota</taxon>
        <taxon>Actinomycetes</taxon>
        <taxon>Bifidobacteriales</taxon>
        <taxon>Bifidobacteriaceae</taxon>
        <taxon>Bifidobacterium</taxon>
    </lineage>
</organism>
<keyword id="KW-0067">ATP-binding</keyword>
<keyword id="KW-0315">Glutamine amidotransferase</keyword>
<keyword id="KW-0332">GMP biosynthesis</keyword>
<keyword id="KW-0436">Ligase</keyword>
<keyword id="KW-0547">Nucleotide-binding</keyword>
<keyword id="KW-0658">Purine biosynthesis</keyword>
<keyword id="KW-1185">Reference proteome</keyword>
<evidence type="ECO:0000255" key="1">
    <source>
        <dbReference type="HAMAP-Rule" id="MF_00344"/>
    </source>
</evidence>
<sequence>MFSPRKIPMNVRGISMANGPVLVVDFGAQYAQLIARRVREAGVYSELVPHSMPVDEILAKDPKAIILSGGPASVFEPGAPTIDTKVFESGVPVLGICYGFQVMAYELGGKVDKAALGEYGKTSATIDDAAGILADSPAEQTTWMSHGVAVEQAPAGFEVLAHTEGAPVAAMADESRKLYGVQWHPEVKHSPLGQKLIENFLHRCAALPNDWDASSIIEDQVKKIREQVGDAEVICGLSGGVDSAVAAALVHKAIGDQLTCVFVDHGLLRKGEVEQVKHDFVAATGIRLITVDAADDFLDALAGVSEPERKRKIIGEKFIRTFEKAQRQVLEEAGARGKEVKFLVQGTLYPDVVESGGGDGAANIKSHHNVGGLPKDIKFQLIEPLRTLFKDEVRAIGTELGLPDEIVWRQPFPGPGLGIRIIGEITKERLDLLREADAIAREELSKAGLDRDIWQCPVVLLADVHSVGVQGDERTYGSPIVLRPVSSEDAMTADWSRVPYDVLATISTRITNECRQINRVVLDCTSKPPATIEWE</sequence>
<feature type="chain" id="PRO_0000140097" description="GMP synthase [glutamine-hydrolyzing]">
    <location>
        <begin position="1"/>
        <end position="535"/>
    </location>
</feature>
<feature type="domain" description="Glutamine amidotransferase type-1" evidence="1">
    <location>
        <begin position="20"/>
        <end position="210"/>
    </location>
</feature>
<feature type="domain" description="GMPS ATP-PPase" evidence="1">
    <location>
        <begin position="211"/>
        <end position="409"/>
    </location>
</feature>
<feature type="active site" description="Nucleophile" evidence="1">
    <location>
        <position position="97"/>
    </location>
</feature>
<feature type="active site" evidence="1">
    <location>
        <position position="184"/>
    </location>
</feature>
<feature type="active site" evidence="1">
    <location>
        <position position="186"/>
    </location>
</feature>
<feature type="binding site" evidence="1">
    <location>
        <begin position="238"/>
        <end position="244"/>
    </location>
    <ligand>
        <name>ATP</name>
        <dbReference type="ChEBI" id="CHEBI:30616"/>
    </ligand>
</feature>
<proteinExistence type="inferred from homology"/>
<protein>
    <recommendedName>
        <fullName evidence="1">GMP synthase [glutamine-hydrolyzing]</fullName>
        <ecNumber evidence="1">6.3.5.2</ecNumber>
    </recommendedName>
    <alternativeName>
        <fullName evidence="1">GMP synthetase</fullName>
    </alternativeName>
    <alternativeName>
        <fullName evidence="1">Glutamine amidotransferase</fullName>
    </alternativeName>
</protein>
<accession>Q8G5P4</accession>
<name>GUAA_BIFLO</name>
<comment type="function">
    <text evidence="1">Catalyzes the synthesis of GMP from XMP.</text>
</comment>
<comment type="catalytic activity">
    <reaction evidence="1">
        <text>XMP + L-glutamine + ATP + H2O = GMP + L-glutamate + AMP + diphosphate + 2 H(+)</text>
        <dbReference type="Rhea" id="RHEA:11680"/>
        <dbReference type="ChEBI" id="CHEBI:15377"/>
        <dbReference type="ChEBI" id="CHEBI:15378"/>
        <dbReference type="ChEBI" id="CHEBI:29985"/>
        <dbReference type="ChEBI" id="CHEBI:30616"/>
        <dbReference type="ChEBI" id="CHEBI:33019"/>
        <dbReference type="ChEBI" id="CHEBI:57464"/>
        <dbReference type="ChEBI" id="CHEBI:58115"/>
        <dbReference type="ChEBI" id="CHEBI:58359"/>
        <dbReference type="ChEBI" id="CHEBI:456215"/>
        <dbReference type="EC" id="6.3.5.2"/>
    </reaction>
</comment>
<comment type="pathway">
    <text evidence="1">Purine metabolism; GMP biosynthesis; GMP from XMP (L-Gln route): step 1/1.</text>
</comment>
<comment type="subunit">
    <text evidence="1">Homodimer.</text>
</comment>